<organism>
    <name type="scientific">Homo sapiens</name>
    <name type="common">Human</name>
    <dbReference type="NCBI Taxonomy" id="9606"/>
    <lineage>
        <taxon>Eukaryota</taxon>
        <taxon>Metazoa</taxon>
        <taxon>Chordata</taxon>
        <taxon>Craniata</taxon>
        <taxon>Vertebrata</taxon>
        <taxon>Euteleostomi</taxon>
        <taxon>Mammalia</taxon>
        <taxon>Eutheria</taxon>
        <taxon>Euarchontoglires</taxon>
        <taxon>Primates</taxon>
        <taxon>Haplorrhini</taxon>
        <taxon>Catarrhini</taxon>
        <taxon>Hominidae</taxon>
        <taxon>Homo</taxon>
    </lineage>
</organism>
<evidence type="ECO:0000250" key="1">
    <source>
        <dbReference type="UniProtKB" id="Q9EPX0"/>
    </source>
</evidence>
<evidence type="ECO:0000250" key="2">
    <source>
        <dbReference type="UniProtKB" id="Q9JK92"/>
    </source>
</evidence>
<evidence type="ECO:0000255" key="3">
    <source>
        <dbReference type="PROSITE-ProRule" id="PRU00285"/>
    </source>
</evidence>
<evidence type="ECO:0000256" key="4">
    <source>
        <dbReference type="SAM" id="MobiDB-lite"/>
    </source>
</evidence>
<evidence type="ECO:0000269" key="5">
    <source>
    </source>
</evidence>
<evidence type="ECO:0000269" key="6">
    <source>
    </source>
</evidence>
<evidence type="ECO:0000269" key="7">
    <source>
    </source>
</evidence>
<evidence type="ECO:0000269" key="8">
    <source>
    </source>
</evidence>
<evidence type="ECO:0000269" key="9">
    <source>
    </source>
</evidence>
<evidence type="ECO:0000269" key="10">
    <source>
    </source>
</evidence>
<evidence type="ECO:0000269" key="11">
    <source>
    </source>
</evidence>
<evidence type="ECO:0000269" key="12">
    <source>
    </source>
</evidence>
<evidence type="ECO:0000269" key="13">
    <source>
    </source>
</evidence>
<evidence type="ECO:0000269" key="14">
    <source>
    </source>
</evidence>
<evidence type="ECO:0000269" key="15">
    <source>
    </source>
</evidence>
<evidence type="ECO:0000269" key="16">
    <source>
    </source>
</evidence>
<evidence type="ECO:0000269" key="17">
    <source>
    </source>
</evidence>
<evidence type="ECO:0000269" key="18">
    <source>
    </source>
</evidence>
<evidence type="ECO:0000269" key="19">
    <source>
    </source>
</evidence>
<evidence type="ECO:0000269" key="20">
    <source>
    </source>
</evidence>
<evidence type="ECO:0000269" key="21">
    <source>
    </source>
</evidence>
<evidence type="ECO:0000269" key="22">
    <source>
    </source>
</evidence>
<evidence type="ECO:0000305" key="23"/>
<evidence type="ECO:0000305" key="24">
    <source>
    </source>
</evidence>
<evidence type="ECO:0007744" key="25">
    <source>
    </source>
</evidence>
<evidence type="ECO:0007744" key="26">
    <source>
    </source>
</evidence>
<evidence type="ECO:0007744" key="27">
    <source>
    </source>
</evidence>
<gene>
    <name type="primary">HSPB8</name>
    <name type="synonym">CRYAC</name>
    <name type="synonym">E2IG1</name>
    <name type="synonym">HSP22</name>
    <name type="ORF">PP1629</name>
</gene>
<keyword id="KW-0002">3D-structure</keyword>
<keyword id="KW-0143">Chaperone</keyword>
<keyword id="KW-0144">Charcot-Marie-Tooth disease</keyword>
<keyword id="KW-0963">Cytoplasm</keyword>
<keyword id="KW-0225">Disease variant</keyword>
<keyword id="KW-0488">Methylation</keyword>
<keyword id="KW-1060">Myofibrillar myopathy</keyword>
<keyword id="KW-0523">Neurodegeneration</keyword>
<keyword id="KW-0622">Neuropathy</keyword>
<keyword id="KW-0539">Nucleus</keyword>
<keyword id="KW-0597">Phosphoprotein</keyword>
<keyword id="KW-1267">Proteomics identification</keyword>
<keyword id="KW-1185">Reference proteome</keyword>
<keyword id="KW-0346">Stress response</keyword>
<feature type="chain" id="PRO_0000125945" description="Heat shock protein beta-8">
    <location>
        <begin position="1"/>
        <end position="196"/>
    </location>
</feature>
<feature type="domain" description="sHSP" evidence="3">
    <location>
        <begin position="74"/>
        <end position="185"/>
    </location>
</feature>
<feature type="region of interest" description="Disordered" evidence="4">
    <location>
        <begin position="176"/>
        <end position="196"/>
    </location>
</feature>
<feature type="compositionally biased region" description="Polar residues" evidence="4">
    <location>
        <begin position="177"/>
        <end position="196"/>
    </location>
</feature>
<feature type="modified residue" description="Phosphoserine" evidence="25 26 27">
    <location>
        <position position="24"/>
    </location>
</feature>
<feature type="modified residue" description="Phosphoserine" evidence="1">
    <location>
        <position position="57"/>
    </location>
</feature>
<feature type="modified residue" description="Phosphothreonine; by PKC; in vitro" evidence="7">
    <location>
        <position position="63"/>
    </location>
</feature>
<feature type="modified residue" description="Asymmetric dimethylarginine" evidence="2">
    <location>
        <position position="71"/>
    </location>
</feature>
<feature type="modified residue" description="Asymmetric dimethylarginine" evidence="2">
    <location>
        <position position="78"/>
    </location>
</feature>
<feature type="sequence variant" id="VAR_042244" description="In a glioblastoma multiforme sample; somatic mutation." evidence="10">
    <original>G</original>
    <variation>S</variation>
    <location>
        <position position="67"/>
    </location>
</feature>
<feature type="sequence variant" id="VAR_042245" description="In dbSNP:rs55826713." evidence="10">
    <original>R</original>
    <variation>M</variation>
    <location>
        <position position="78"/>
    </location>
</feature>
<feature type="sequence variant" id="VAR_078133" description="In HMND2; uncertain significance; no effect on cytoskeleton architecture; no effect on cytoplasmic location; no effect on interaction with BAG3; dbSNP:rs1565927080." evidence="16">
    <original>P</original>
    <variation>L</variation>
    <location>
        <position position="90"/>
    </location>
</feature>
<feature type="sequence variant" id="VAR_078134" description="In HMND2; uncertain significance; no effect on cytoskeleton architecture; no effect on cytoplasmic location; no effect on interaction with BAG3; dbSNP:rs1565929080." evidence="16">
    <original>N</original>
    <variation>T</variation>
    <location>
        <position position="138"/>
    </location>
</feature>
<feature type="sequence variant" id="VAR_018504" description="In HMND2 and MFM13; pathogenic; MFM13 patients display concomitant neuropathy features; affects chaperone function and results in increased protein aggregation and accumulation of cytoplasmic aggregates; increased interaction with HSPB1; dbSNP:rs104894351." evidence="8 14 18">
    <original>K</original>
    <variation>E</variation>
    <location>
        <position position="141"/>
    </location>
</feature>
<feature type="sequence variant" id="VAR_078135" description="In HMND2; likely pathogenic; increased interaction with BAG3; no effect on cytoskeleton architecture; no effect on cytoplasmic location; dbSNP:rs1565929090." evidence="16">
    <original>K</original>
    <variation>M</variation>
    <location>
        <position position="141"/>
    </location>
</feature>
<feature type="sequence variant" id="VAR_018505" description="In CMT2L and HMND2; pathogenic; affects chaperone function and results in increased protein aggregation and accumulation of cytoplasmic aggregates; increased interaction with HSPB1; no effect on cytoskeleton architecture; no effect on cytoplasmic location; increased interaction with BAG3; dbSNP:rs104894345." evidence="8 9 16">
    <original>K</original>
    <variation>N</variation>
    <location>
        <position position="141"/>
    </location>
</feature>
<feature type="sequence variant" id="VAR_090397" description="In CMT2L; pathogenic." evidence="13">
    <original>K</original>
    <variation>T</variation>
    <location>
        <position position="141"/>
    </location>
</feature>
<feature type="sequence conflict" description="In Ref. 3; AAD55359." evidence="23" ref="3">
    <original>W</original>
    <variation>C</variation>
    <location>
        <position position="51"/>
    </location>
</feature>
<reference key="1">
    <citation type="journal article" date="2000" name="Cancer Res.">
        <title>Effects of estrogen on global gene expression: identification of novel targets of estrogen action.</title>
        <authorList>
            <person name="Charpentier A.H."/>
            <person name="Bednarek A.K."/>
            <person name="Daniel R.L."/>
            <person name="Hawkins K.A."/>
            <person name="Laflin K.J."/>
            <person name="Gaddis S."/>
            <person name="MacLeod M.C."/>
            <person name="Aldaz C.M."/>
        </authorList>
    </citation>
    <scope>NUCLEOTIDE SEQUENCE [MRNA]</scope>
</reference>
<reference key="2">
    <citation type="journal article" date="2001" name="J. Biol. Chem.">
        <title>HSP22, a new member of the small heat shock protein superfamily, interacts with mimic of phosphorylated HSP27 (3DHSP27).</title>
        <authorList>
            <person name="Benndorf R."/>
            <person name="Sun X."/>
            <person name="Gilmont R.R."/>
            <person name="Biederman K.J."/>
            <person name="Molloy M.P."/>
            <person name="Goodmurphy C.W."/>
            <person name="Cheng H."/>
            <person name="Andrews P.C."/>
            <person name="Welsh M.J."/>
        </authorList>
    </citation>
    <scope>NUCLEOTIDE SEQUENCE [MRNA]</scope>
    <scope>INTERACTION WITH HSPB1</scope>
</reference>
<reference key="3">
    <citation type="journal article" date="2000" name="J. Biol. Chem.">
        <title>A novel human gene similar to the protein kinase (PK) coding domain of the large subunit of herpes simplex virus type 2 ribonucleotide reductase (ICP10) codes for a serine-threonine PK and is expressed in melanoma cells.</title>
        <authorList>
            <person name="Smith C.C."/>
            <person name="Yu Y.X."/>
            <person name="Kulka M."/>
            <person name="Aurelian L."/>
        </authorList>
    </citation>
    <scope>NUCLEOTIDE SEQUENCE [MRNA]</scope>
    <source>
        <tissue>Melanoma</tissue>
    </source>
</reference>
<reference key="4">
    <citation type="journal article" date="2001" name="Genome Res.">
        <title>Towards a catalog of human genes and proteins: sequencing and analysis of 500 novel complete protein coding human cDNAs.</title>
        <authorList>
            <person name="Wiemann S."/>
            <person name="Weil B."/>
            <person name="Wellenreuther R."/>
            <person name="Gassenhuber J."/>
            <person name="Glassl S."/>
            <person name="Ansorge W."/>
            <person name="Boecher M."/>
            <person name="Bloecker H."/>
            <person name="Bauersachs S."/>
            <person name="Blum H."/>
            <person name="Lauber J."/>
            <person name="Duesterhoeft A."/>
            <person name="Beyer A."/>
            <person name="Koehrer K."/>
            <person name="Strack N."/>
            <person name="Mewes H.-W."/>
            <person name="Ottenwaelder B."/>
            <person name="Obermaier B."/>
            <person name="Tampe J."/>
            <person name="Heubner D."/>
            <person name="Wambutt R."/>
            <person name="Korn B."/>
            <person name="Klein M."/>
            <person name="Poustka A."/>
        </authorList>
    </citation>
    <scope>NUCLEOTIDE SEQUENCE [LARGE SCALE MRNA]</scope>
    <source>
        <tissue>Uterus</tissue>
    </source>
</reference>
<reference key="5">
    <citation type="journal article" date="2004" name="Proc. Natl. Acad. Sci. U.S.A.">
        <title>Large-scale cDNA transfection screening for genes related to cancer development and progression.</title>
        <authorList>
            <person name="Wan D."/>
            <person name="Gong Y."/>
            <person name="Qin W."/>
            <person name="Zhang P."/>
            <person name="Li J."/>
            <person name="Wei L."/>
            <person name="Zhou X."/>
            <person name="Li H."/>
            <person name="Qiu X."/>
            <person name="Zhong F."/>
            <person name="He L."/>
            <person name="Yu J."/>
            <person name="Yao G."/>
            <person name="Jiang H."/>
            <person name="Qian L."/>
            <person name="Yu Y."/>
            <person name="Shu H."/>
            <person name="Chen X."/>
            <person name="Xu H."/>
            <person name="Guo M."/>
            <person name="Pan Z."/>
            <person name="Chen Y."/>
            <person name="Ge C."/>
            <person name="Yang S."/>
            <person name="Gu J."/>
        </authorList>
    </citation>
    <scope>NUCLEOTIDE SEQUENCE [LARGE SCALE MRNA]</scope>
</reference>
<reference key="6">
    <citation type="submission" date="2003-05" db="EMBL/GenBank/DDBJ databases">
        <title>Cloning of human full-length CDSs in BD Creator(TM) system donor vector.</title>
        <authorList>
            <person name="Kalnine N."/>
            <person name="Chen X."/>
            <person name="Rolfs A."/>
            <person name="Halleck A."/>
            <person name="Hines L."/>
            <person name="Eisenstein S."/>
            <person name="Koundinya M."/>
            <person name="Raphael J."/>
            <person name="Moreira D."/>
            <person name="Kelley T."/>
            <person name="LaBaer J."/>
            <person name="Lin Y."/>
            <person name="Phelan M."/>
            <person name="Farmer A."/>
        </authorList>
    </citation>
    <scope>NUCLEOTIDE SEQUENCE [LARGE SCALE MRNA]</scope>
</reference>
<reference key="7">
    <citation type="submission" date="2004-06" db="EMBL/GenBank/DDBJ databases">
        <title>Cloning of human full open reading frames in Gateway(TM) system entry vector (pDONR201).</title>
        <authorList>
            <person name="Ebert L."/>
            <person name="Schick M."/>
            <person name="Neubert P."/>
            <person name="Schatten R."/>
            <person name="Henze S."/>
            <person name="Korn B."/>
        </authorList>
    </citation>
    <scope>NUCLEOTIDE SEQUENCE [LARGE SCALE MRNA]</scope>
</reference>
<reference key="8">
    <citation type="journal article" date="2004" name="Nat. Genet.">
        <title>Complete sequencing and characterization of 21,243 full-length human cDNAs.</title>
        <authorList>
            <person name="Ota T."/>
            <person name="Suzuki Y."/>
            <person name="Nishikawa T."/>
            <person name="Otsuki T."/>
            <person name="Sugiyama T."/>
            <person name="Irie R."/>
            <person name="Wakamatsu A."/>
            <person name="Hayashi K."/>
            <person name="Sato H."/>
            <person name="Nagai K."/>
            <person name="Kimura K."/>
            <person name="Makita H."/>
            <person name="Sekine M."/>
            <person name="Obayashi M."/>
            <person name="Nishi T."/>
            <person name="Shibahara T."/>
            <person name="Tanaka T."/>
            <person name="Ishii S."/>
            <person name="Yamamoto J."/>
            <person name="Saito K."/>
            <person name="Kawai Y."/>
            <person name="Isono Y."/>
            <person name="Nakamura Y."/>
            <person name="Nagahari K."/>
            <person name="Murakami K."/>
            <person name="Yasuda T."/>
            <person name="Iwayanagi T."/>
            <person name="Wagatsuma M."/>
            <person name="Shiratori A."/>
            <person name="Sudo H."/>
            <person name="Hosoiri T."/>
            <person name="Kaku Y."/>
            <person name="Kodaira H."/>
            <person name="Kondo H."/>
            <person name="Sugawara M."/>
            <person name="Takahashi M."/>
            <person name="Kanda K."/>
            <person name="Yokoi T."/>
            <person name="Furuya T."/>
            <person name="Kikkawa E."/>
            <person name="Omura Y."/>
            <person name="Abe K."/>
            <person name="Kamihara K."/>
            <person name="Katsuta N."/>
            <person name="Sato K."/>
            <person name="Tanikawa M."/>
            <person name="Yamazaki M."/>
            <person name="Ninomiya K."/>
            <person name="Ishibashi T."/>
            <person name="Yamashita H."/>
            <person name="Murakawa K."/>
            <person name="Fujimori K."/>
            <person name="Tanai H."/>
            <person name="Kimata M."/>
            <person name="Watanabe M."/>
            <person name="Hiraoka S."/>
            <person name="Chiba Y."/>
            <person name="Ishida S."/>
            <person name="Ono Y."/>
            <person name="Takiguchi S."/>
            <person name="Watanabe S."/>
            <person name="Yosida M."/>
            <person name="Hotuta T."/>
            <person name="Kusano J."/>
            <person name="Kanehori K."/>
            <person name="Takahashi-Fujii A."/>
            <person name="Hara H."/>
            <person name="Tanase T.-O."/>
            <person name="Nomura Y."/>
            <person name="Togiya S."/>
            <person name="Komai F."/>
            <person name="Hara R."/>
            <person name="Takeuchi K."/>
            <person name="Arita M."/>
            <person name="Imose N."/>
            <person name="Musashino K."/>
            <person name="Yuuki H."/>
            <person name="Oshima A."/>
            <person name="Sasaki N."/>
            <person name="Aotsuka S."/>
            <person name="Yoshikawa Y."/>
            <person name="Matsunawa H."/>
            <person name="Ichihara T."/>
            <person name="Shiohata N."/>
            <person name="Sano S."/>
            <person name="Moriya S."/>
            <person name="Momiyama H."/>
            <person name="Satoh N."/>
            <person name="Takami S."/>
            <person name="Terashima Y."/>
            <person name="Suzuki O."/>
            <person name="Nakagawa S."/>
            <person name="Senoh A."/>
            <person name="Mizoguchi H."/>
            <person name="Goto Y."/>
            <person name="Shimizu F."/>
            <person name="Wakebe H."/>
            <person name="Hishigaki H."/>
            <person name="Watanabe T."/>
            <person name="Sugiyama A."/>
            <person name="Takemoto M."/>
            <person name="Kawakami B."/>
            <person name="Yamazaki M."/>
            <person name="Watanabe K."/>
            <person name="Kumagai A."/>
            <person name="Itakura S."/>
            <person name="Fukuzumi Y."/>
            <person name="Fujimori Y."/>
            <person name="Komiyama M."/>
            <person name="Tashiro H."/>
            <person name="Tanigami A."/>
            <person name="Fujiwara T."/>
            <person name="Ono T."/>
            <person name="Yamada K."/>
            <person name="Fujii Y."/>
            <person name="Ozaki K."/>
            <person name="Hirao M."/>
            <person name="Ohmori Y."/>
            <person name="Kawabata A."/>
            <person name="Hikiji T."/>
            <person name="Kobatake N."/>
            <person name="Inagaki H."/>
            <person name="Ikema Y."/>
            <person name="Okamoto S."/>
            <person name="Okitani R."/>
            <person name="Kawakami T."/>
            <person name="Noguchi S."/>
            <person name="Itoh T."/>
            <person name="Shigeta K."/>
            <person name="Senba T."/>
            <person name="Matsumura K."/>
            <person name="Nakajima Y."/>
            <person name="Mizuno T."/>
            <person name="Morinaga M."/>
            <person name="Sasaki M."/>
            <person name="Togashi T."/>
            <person name="Oyama M."/>
            <person name="Hata H."/>
            <person name="Watanabe M."/>
            <person name="Komatsu T."/>
            <person name="Mizushima-Sugano J."/>
            <person name="Satoh T."/>
            <person name="Shirai Y."/>
            <person name="Takahashi Y."/>
            <person name="Nakagawa K."/>
            <person name="Okumura K."/>
            <person name="Nagase T."/>
            <person name="Nomura N."/>
            <person name="Kikuchi H."/>
            <person name="Masuho Y."/>
            <person name="Yamashita R."/>
            <person name="Nakai K."/>
            <person name="Yada T."/>
            <person name="Nakamura Y."/>
            <person name="Ohara O."/>
            <person name="Isogai T."/>
            <person name="Sugano S."/>
        </authorList>
    </citation>
    <scope>NUCLEOTIDE SEQUENCE [LARGE SCALE MRNA]</scope>
    <source>
        <tissue>Thalamus</tissue>
    </source>
</reference>
<reference key="9">
    <citation type="submission" date="2005-07" db="EMBL/GenBank/DDBJ databases">
        <authorList>
            <person name="Mural R.J."/>
            <person name="Istrail S."/>
            <person name="Sutton G.G."/>
            <person name="Florea L."/>
            <person name="Halpern A.L."/>
            <person name="Mobarry C.M."/>
            <person name="Lippert R."/>
            <person name="Walenz B."/>
            <person name="Shatkay H."/>
            <person name="Dew I."/>
            <person name="Miller J.R."/>
            <person name="Flanigan M.J."/>
            <person name="Edwards N.J."/>
            <person name="Bolanos R."/>
            <person name="Fasulo D."/>
            <person name="Halldorsson B.V."/>
            <person name="Hannenhalli S."/>
            <person name="Turner R."/>
            <person name="Yooseph S."/>
            <person name="Lu F."/>
            <person name="Nusskern D.R."/>
            <person name="Shue B.C."/>
            <person name="Zheng X.H."/>
            <person name="Zhong F."/>
            <person name="Delcher A.L."/>
            <person name="Huson D.H."/>
            <person name="Kravitz S.A."/>
            <person name="Mouchard L."/>
            <person name="Reinert K."/>
            <person name="Remington K.A."/>
            <person name="Clark A.G."/>
            <person name="Waterman M.S."/>
            <person name="Eichler E.E."/>
            <person name="Adams M.D."/>
            <person name="Hunkapiller M.W."/>
            <person name="Myers E.W."/>
            <person name="Venter J.C."/>
        </authorList>
    </citation>
    <scope>NUCLEOTIDE SEQUENCE [LARGE SCALE GENOMIC DNA]</scope>
</reference>
<reference key="10">
    <citation type="journal article" date="2004" name="Genome Res.">
        <title>The status, quality, and expansion of the NIH full-length cDNA project: the Mammalian Gene Collection (MGC).</title>
        <authorList>
            <consortium name="The MGC Project Team"/>
        </authorList>
    </citation>
    <scope>NUCLEOTIDE SEQUENCE [LARGE SCALE MRNA]</scope>
    <source>
        <tissue>Uterus</tissue>
    </source>
</reference>
<reference key="11">
    <citation type="journal article" date="2001" name="Anal. Chem.">
        <title>Phosphopeptide derivatization signatures to identify serine and threonine phosphorylated peptides by mass spectrometry.</title>
        <authorList>
            <person name="Molloy M.P."/>
            <person name="Andrews P.C."/>
        </authorList>
    </citation>
    <scope>PHOSPHORYLATION AT THR-63</scope>
    <scope>IDENTIFICATION BY MASS SPECTROMETRY</scope>
</reference>
<reference key="12">
    <citation type="journal article" date="2001" name="Biochim. Biophys. Acta">
        <title>Characterization of two novel human small heat shock proteins: protein kinase-related HspB8 and testis-specific HspB9.</title>
        <authorList>
            <person name="Kappe G."/>
            <person name="Verschuure P."/>
            <person name="Philipsen R.L.A."/>
            <person name="Staalduinen A.A."/>
            <person name="Van de Boogaart P."/>
            <person name="Boelens W.C."/>
            <person name="de Jong W.W."/>
        </authorList>
    </citation>
    <scope>TISSUE SPECIFICITY</scope>
</reference>
<reference key="13">
    <citation type="journal article" date="2008" name="J. Proteome Res.">
        <title>Combining protein-based IMAC, peptide-based IMAC, and MudPIT for efficient phosphoproteomic analysis.</title>
        <authorList>
            <person name="Cantin G.T."/>
            <person name="Yi W."/>
            <person name="Lu B."/>
            <person name="Park S.K."/>
            <person name="Xu T."/>
            <person name="Lee J.-D."/>
            <person name="Yates J.R. III"/>
        </authorList>
    </citation>
    <scope>PHOSPHORYLATION [LARGE SCALE ANALYSIS] AT SER-24</scope>
    <scope>IDENTIFICATION BY MASS SPECTROMETRY [LARGE SCALE ANALYSIS]</scope>
    <source>
        <tissue>Cervix carcinoma</tissue>
    </source>
</reference>
<reference key="14">
    <citation type="journal article" date="2008" name="Proc. Natl. Acad. Sci. U.S.A.">
        <title>A quantitative atlas of mitotic phosphorylation.</title>
        <authorList>
            <person name="Dephoure N."/>
            <person name="Zhou C."/>
            <person name="Villen J."/>
            <person name="Beausoleil S.A."/>
            <person name="Bakalarski C.E."/>
            <person name="Elledge S.J."/>
            <person name="Gygi S.P."/>
        </authorList>
    </citation>
    <scope>PHOSPHORYLATION [LARGE SCALE ANALYSIS] AT SER-24</scope>
    <scope>IDENTIFICATION BY MASS SPECTROMETRY [LARGE SCALE ANALYSIS]</scope>
    <source>
        <tissue>Cervix carcinoma</tissue>
    </source>
</reference>
<reference key="15">
    <citation type="journal article" date="2009" name="Biochim. Biophys. Acta">
        <title>HSPB7 is a SC35 speckle resident small heat shock protein.</title>
        <authorList>
            <person name="Vos M.J."/>
            <person name="Kanon B."/>
            <person name="Kampinga H.H."/>
        </authorList>
    </citation>
    <scope>SUBCELLULAR LOCATION</scope>
</reference>
<reference key="16">
    <citation type="journal article" date="2010" name="Curr. Biol.">
        <title>Chaperone-assisted selective autophagy is essential for muscle maintenance.</title>
        <authorList>
            <person name="Arndt V."/>
            <person name="Dick N."/>
            <person name="Tawo R."/>
            <person name="Dreiseidler M."/>
            <person name="Wenzel D."/>
            <person name="Hesse M."/>
            <person name="Fuerst D.O."/>
            <person name="Saftig P."/>
            <person name="Saint R."/>
            <person name="Fleischmann B.K."/>
            <person name="Hoch M."/>
            <person name="Hoehfeld J."/>
        </authorList>
    </citation>
    <scope>INTERACTION WITH BAG3; HSPA8 AND STUB1 IN CASA COMPLEX</scope>
</reference>
<reference key="17">
    <citation type="journal article" date="2011" name="BMC Syst. Biol.">
        <title>Initial characterization of the human central proteome.</title>
        <authorList>
            <person name="Burkard T.R."/>
            <person name="Planyavsky M."/>
            <person name="Kaupe I."/>
            <person name="Breitwieser F.P."/>
            <person name="Buerckstuemmer T."/>
            <person name="Bennett K.L."/>
            <person name="Superti-Furga G."/>
            <person name="Colinge J."/>
        </authorList>
    </citation>
    <scope>IDENTIFICATION BY MASS SPECTROMETRY [LARGE SCALE ANALYSIS]</scope>
</reference>
<reference key="18">
    <citation type="journal article" date="2012" name="Nat. Genet.">
        <title>Mutations affecting the cytoplasmic functions of the co-chaperone DNAJB6 cause limb-girdle muscular dystrophy.</title>
        <authorList>
            <person name="Sarparanta J."/>
            <person name="Jonson P.H."/>
            <person name="Golzio C."/>
            <person name="Sandell S."/>
            <person name="Luque H."/>
            <person name="Screen M."/>
            <person name="McDonald K."/>
            <person name="Stajich J.M."/>
            <person name="Mahjneh I."/>
            <person name="Vihola A."/>
            <person name="Raheem O."/>
            <person name="Penttila S."/>
            <person name="Lehtinen S."/>
            <person name="Huovinen S."/>
            <person name="Palmio J."/>
            <person name="Tasca G."/>
            <person name="Ricci E."/>
            <person name="Hackman P."/>
            <person name="Hauser M."/>
            <person name="Katsanis N."/>
            <person name="Udd B."/>
        </authorList>
    </citation>
    <scope>INTERACTION WITH DNAJB6</scope>
</reference>
<reference key="19">
    <citation type="journal article" date="2013" name="J. Proteome Res.">
        <title>Toward a comprehensive characterization of a human cancer cell phosphoproteome.</title>
        <authorList>
            <person name="Zhou H."/>
            <person name="Di Palma S."/>
            <person name="Preisinger C."/>
            <person name="Peng M."/>
            <person name="Polat A.N."/>
            <person name="Heck A.J."/>
            <person name="Mohammed S."/>
        </authorList>
    </citation>
    <scope>PHOSPHORYLATION [LARGE SCALE ANALYSIS] AT SER-24</scope>
    <scope>IDENTIFICATION BY MASS SPECTROMETRY [LARGE SCALE ANALYSIS]</scope>
    <source>
        <tissue>Cervix carcinoma</tissue>
    </source>
</reference>
<reference key="20">
    <citation type="journal article" date="2017" name="J. Mol. Biol.">
        <title>BAG3 is a modular, scaffolding protein that physically links heat shock protein 70 (Hsp70) to the small heat shock proteins.</title>
        <authorList>
            <person name="Rauch J.N."/>
            <person name="Tse E."/>
            <person name="Freilich R."/>
            <person name="Mok S.A."/>
            <person name="Makley L.N."/>
            <person name="Southworth D.R."/>
            <person name="Gestwicki J.E."/>
        </authorList>
    </citation>
    <scope>INTERACTION WITH BAG3 AND HSPA1A</scope>
</reference>
<reference key="21">
    <citation type="journal article" date="2004" name="Nat. Genet.">
        <title>Hot-spot residue in small heat-shock protein 22 causes distal motor neuropathy.</title>
        <authorList>
            <person name="Irobi J."/>
            <person name="Van Impe K."/>
            <person name="Seeman P."/>
            <person name="Jordanova A."/>
            <person name="Dierick I."/>
            <person name="Verpoorten N."/>
            <person name="Michalik A."/>
            <person name="De Vriendt E."/>
            <person name="Jacobs A."/>
            <person name="Van Gerwen V."/>
            <person name="Vennekens K."/>
            <person name="Mazanec R."/>
            <person name="Tournev I."/>
            <person name="Hilton-Jones D."/>
            <person name="Talbot K."/>
            <person name="Kremensky I."/>
            <person name="Van Den Bosch L."/>
            <person name="Robberecht W."/>
            <person name="Van Vandekerckhove J."/>
            <person name="Broeckhoven C."/>
            <person name="Gettemans J."/>
            <person name="De Jonghe P."/>
            <person name="Timmerman V."/>
        </authorList>
    </citation>
    <scope>VARIANTS HMND2 GLU-141 AND ASN-141</scope>
    <scope>INVOLVEMENT IN HMND2</scope>
    <scope>CHARACTERIZATION OF VARIANTS HMND2 GLU-141 AND ASN-141</scope>
</reference>
<reference key="22">
    <citation type="journal article" date="2005" name="Hum. Genet.">
        <title>Small heat-shock protein 22 mutated in autosomal dominant Charcot-Marie-Tooth disease type 2L.</title>
        <authorList>
            <person name="Tang B.-S."/>
            <person name="Zhao G.-H."/>
            <person name="Luo W."/>
            <person name="Xia K."/>
            <person name="Cai F."/>
            <person name="Pan Q."/>
            <person name="Zhang R.-X."/>
            <person name="Zhang F.F."/>
            <person name="Liu X.-M."/>
            <person name="Chen B."/>
            <person name="Zhang C."/>
            <person name="Shen L."/>
            <person name="Jiang H."/>
            <person name="Long Z.G."/>
            <person name="Dai H.-P."/>
        </authorList>
    </citation>
    <scope>VARIANT CMT2L ASN-141</scope>
    <scope>INVOLVEMENT IN CMT2L</scope>
</reference>
<reference key="23">
    <citation type="journal article" date="2007" name="Nature">
        <title>Patterns of somatic mutation in human cancer genomes.</title>
        <authorList>
            <person name="Greenman C."/>
            <person name="Stephens P."/>
            <person name="Smith R."/>
            <person name="Dalgliesh G.L."/>
            <person name="Hunter C."/>
            <person name="Bignell G."/>
            <person name="Davies H."/>
            <person name="Teague J."/>
            <person name="Butler A."/>
            <person name="Stevens C."/>
            <person name="Edkins S."/>
            <person name="O'Meara S."/>
            <person name="Vastrik I."/>
            <person name="Schmidt E.E."/>
            <person name="Avis T."/>
            <person name="Barthorpe S."/>
            <person name="Bhamra G."/>
            <person name="Buck G."/>
            <person name="Choudhury B."/>
            <person name="Clements J."/>
            <person name="Cole J."/>
            <person name="Dicks E."/>
            <person name="Forbes S."/>
            <person name="Gray K."/>
            <person name="Halliday K."/>
            <person name="Harrison R."/>
            <person name="Hills K."/>
            <person name="Hinton J."/>
            <person name="Jenkinson A."/>
            <person name="Jones D."/>
            <person name="Menzies A."/>
            <person name="Mironenko T."/>
            <person name="Perry J."/>
            <person name="Raine K."/>
            <person name="Richardson D."/>
            <person name="Shepherd R."/>
            <person name="Small A."/>
            <person name="Tofts C."/>
            <person name="Varian J."/>
            <person name="Webb T."/>
            <person name="West S."/>
            <person name="Widaa S."/>
            <person name="Yates A."/>
            <person name="Cahill D.P."/>
            <person name="Louis D.N."/>
            <person name="Goldstraw P."/>
            <person name="Nicholson A.G."/>
            <person name="Brasseur F."/>
            <person name="Looijenga L."/>
            <person name="Weber B.L."/>
            <person name="Chiew Y.-E."/>
            <person name="DeFazio A."/>
            <person name="Greaves M.F."/>
            <person name="Green A.R."/>
            <person name="Campbell P."/>
            <person name="Birney E."/>
            <person name="Easton D.F."/>
            <person name="Chenevix-Trench G."/>
            <person name="Tan M.-H."/>
            <person name="Khoo S.K."/>
            <person name="Teh B.T."/>
            <person name="Yuen S.T."/>
            <person name="Leung S.Y."/>
            <person name="Wooster R."/>
            <person name="Futreal P.A."/>
            <person name="Stratton M.R."/>
        </authorList>
    </citation>
    <scope>VARIANTS [LARGE SCALE ANALYSIS] SER-67 AND MET-78</scope>
</reference>
<reference key="24">
    <citation type="journal article" date="2013" name="Neuromuscul. Disord.">
        <title>A novel Lys141Thr mutation in small heat shock protein 22 (HSPB8) gene in Charcot-Marie-Tooth disease type 2L.</title>
        <authorList>
            <person name="Nakhro K."/>
            <person name="Park J.M."/>
            <person name="Kim Y.J."/>
            <person name="Yoon B.R."/>
            <person name="Yoo J.H."/>
            <person name="Koo H."/>
            <person name="Choi B.O."/>
            <person name="Chung K.W."/>
        </authorList>
    </citation>
    <scope>VARIANT CMT2L THR-141</scope>
    <scope>INVOLVEMENT IN CMT2L</scope>
</reference>
<reference key="25">
    <citation type="journal article" date="2016" name="Neurology">
        <title>Mutations in HSPB8 causing a new phenotype of distal myopathy and motor neuropathy.</title>
        <authorList>
            <person name="Ghaoui R."/>
            <person name="Palmio J."/>
            <person name="Brewer J."/>
            <person name="Lek M."/>
            <person name="Needham M."/>
            <person name="Evilae A."/>
            <person name="Hackman P."/>
            <person name="Jonson P.H."/>
            <person name="Penttilae S."/>
            <person name="Vihola A."/>
            <person name="Huovinen S."/>
            <person name="Lindfors M."/>
            <person name="Davis R.L."/>
            <person name="Waddell L."/>
            <person name="Kaur S."/>
            <person name="Yiannikas C."/>
            <person name="North K."/>
            <person name="Clarke N."/>
            <person name="MacArthur D.G."/>
            <person name="Sue C.M."/>
            <person name="Udd B."/>
        </authorList>
    </citation>
    <scope>VARIANT MFM13 GLU-141</scope>
    <scope>INVOLVEMENT IN MFM13</scope>
    <scope>CHARACTERIZATION OF VARIANT MFM13 GLU-141</scope>
</reference>
<reference key="26">
    <citation type="journal article" date="2017" name="Acta Neuropathol.">
        <title>HSPB8 haploinsufficiency causes dominant adult-onset axial and distal myopathy.</title>
        <authorList>
            <person name="Echaniz-Laguna A."/>
            <person name="Lornage X."/>
            <person name="Lannes B."/>
            <person name="Schneider R."/>
            <person name="Bierry G."/>
            <person name="Dondaine N."/>
            <person name="Boland A."/>
            <person name="Deleuze J.F."/>
            <person name="Boehm J."/>
            <person name="Thompson J."/>
            <person name="Laporte J."/>
            <person name="Biancalana V."/>
        </authorList>
    </citation>
    <scope>INVOLVEMENT IN MFM13</scope>
</reference>
<reference key="27">
    <citation type="journal article" date="2017" name="Hum. Mutat.">
        <title>Axonal Neuropathies due to Mutations in Small Heat Shock Proteins: Clinical, Genetic, and Functional Insights into Novel Mutations.</title>
        <authorList>
            <person name="Echaniz-Laguna A."/>
            <person name="Geuens T."/>
            <person name="Petiot P."/>
            <person name="Pereon Y."/>
            <person name="Adriaenssens E."/>
            <person name="Haidar M."/>
            <person name="Capponi S."/>
            <person name="Maisonobe T."/>
            <person name="Fournier E."/>
            <person name="Dubourg O."/>
            <person name="Degos B."/>
            <person name="Salachas F."/>
            <person name="Lenglet T."/>
            <person name="Eymard B."/>
            <person name="Delmont E."/>
            <person name="Pouget J."/>
            <person name="Juntas Morales R."/>
            <person name="Goizet C."/>
            <person name="Latour P."/>
            <person name="Timmerman V."/>
            <person name="Stojkovic T."/>
        </authorList>
    </citation>
    <scope>VARIANTS HMND2 LEU-90; THR-138; ASN-141 AND MET-141</scope>
    <scope>INVOLVEMENT IN HMND2</scope>
    <scope>INTERACTION WITH BAG3</scope>
    <scope>SUBCELLULAR LOCATION</scope>
    <scope>CHARACTERIZATION OF VARIANTS HMND2 LEU-90; THR-138; ASN-141 AND MET-141</scope>
</reference>
<reference key="28">
    <citation type="journal article" date="2018" name="Eur. J. Neurol.">
        <title>Altered TDP-43-dependent splicing in HSPB8-related distal hereditary motor neuropathy and myofibrillar myopathy.</title>
        <authorList>
            <person name="Cortese A."/>
            <person name="Laura M."/>
            <person name="Casali C."/>
            <person name="Nishino I."/>
            <person name="Hayashi Y.K."/>
            <person name="Magri S."/>
            <person name="Taroni F."/>
            <person name="Stuani C."/>
            <person name="Saveri P."/>
            <person name="Moggio M."/>
            <person name="Ripolone M."/>
            <person name="Prelle A."/>
            <person name="Pisciotta C."/>
            <person name="Sagnelli A."/>
            <person name="Pichiecchio A."/>
            <person name="Reilly M.M."/>
            <person name="Buratti E."/>
            <person name="Pareyson D."/>
        </authorList>
    </citation>
    <scope>VARIANT HMND2 GLU-141</scope>
    <scope>INVOLVEMENT IN HMND2</scope>
</reference>
<reference key="29">
    <citation type="journal article" date="2019" name="Neurol. Genet.">
        <title>New family with HSPB8-associated autosomal dominant rimmed vacuolar myopathy.</title>
        <authorList>
            <person name="Al-Tahan S."/>
            <person name="Weiss L."/>
            <person name="Yu H."/>
            <person name="Tang S."/>
            <person name="Saporta M."/>
            <person name="Vihola A."/>
            <person name="Mozaffar T."/>
            <person name="Udd B."/>
            <person name="Kimonis V."/>
        </authorList>
    </citation>
    <scope>INVOLVEMENT IN MFM13</scope>
</reference>
<reference key="30">
    <citation type="journal article" date="2020" name="Neuromuscul. Disord.">
        <title>A novel heterozygous mutation in the C-terminal region of HSPB8 leads to limb-girdle rimmed vacuolar myopathy.</title>
        <authorList>
            <person name="Nicolau S."/>
            <person name="Liewluck T."/>
            <person name="Elliott J.L."/>
            <person name="Engel A.G."/>
            <person name="Milone M."/>
        </authorList>
    </citation>
    <scope>INVOLVEMENT IN MFM13</scope>
</reference>
<reference key="31">
    <citation type="journal article" date="2021" name="J. Hum. Genet.">
        <title>A novel deletion in the C-terminal region of HSPB8 in a family with rimmed vacuolar myopathy.</title>
        <authorList>
            <person name="Inoue-Shibui A."/>
            <person name="Niihori T."/>
            <person name="Kobayashi M."/>
            <person name="Suzuki N."/>
            <person name="Izumi R."/>
            <person name="Warita H."/>
            <person name="Hara K."/>
            <person name="Shirota M."/>
            <person name="Funayama R."/>
            <person name="Nakayama K."/>
            <person name="Nishino I."/>
            <person name="Aoki M."/>
            <person name="Aoki Y."/>
        </authorList>
    </citation>
    <scope>INVOLVEMENT IN MFM13</scope>
</reference>
<reference key="32">
    <citation type="journal article" date="2025" name="J. Hum. Genet.">
        <title>Expanding the spectrum of HSPB8-related myopathy: a novel mutation causing atypical pediatric-onset axial and limb-girdle involvement with autophagy abnormalities and molecular dynamics studies.</title>
        <authorList>
            <person name="Yang G."/>
            <person name="Lv X."/>
            <person name="Yang M."/>
            <person name="Feng Y."/>
            <person name="Wang G."/>
            <person name="Yan C."/>
            <person name="Lin P."/>
        </authorList>
    </citation>
    <scope>INVOLVEMENT IN MFM13</scope>
</reference>
<sequence>MADGQMPFSCHYPSRLRRDPFRDSPLSSRLLDDGFGMDPFPDDLTASWPDWALPRLSSAWPGTLRSGMVPRGPTATARFGVPAEGRTPPPFPGEPWKVCVNVHSFKPEELMVKTKDGYVEVSGKHEEKQQEGGIVSKNFTKKIQLPAEVDPVTVFASLSPEGLLIIEAPQVPPYSTFGESSFNNELPQDSQEVTCT</sequence>
<protein>
    <recommendedName>
        <fullName>Heat shock protein beta-8</fullName>
        <shortName>HspB8</shortName>
    </recommendedName>
    <alternativeName>
        <fullName>Alpha-crystallin C chain</fullName>
    </alternativeName>
    <alternativeName>
        <fullName>E2-induced gene 1 protein</fullName>
    </alternativeName>
    <alternativeName>
        <fullName>Heat shock protein family B member 8</fullName>
    </alternativeName>
    <alternativeName>
        <fullName>Protein kinase H11</fullName>
    </alternativeName>
    <alternativeName>
        <fullName>Small stress protein-like protein HSP22</fullName>
    </alternativeName>
</protein>
<proteinExistence type="evidence at protein level"/>
<name>HSPB8_HUMAN</name>
<dbReference type="EMBL" id="AF191017">
    <property type="protein sequence ID" value="AAF09481.1"/>
    <property type="molecule type" value="mRNA"/>
</dbReference>
<dbReference type="EMBL" id="AF250138">
    <property type="protein sequence ID" value="AAF65562.1"/>
    <property type="molecule type" value="mRNA"/>
</dbReference>
<dbReference type="EMBL" id="AF133207">
    <property type="protein sequence ID" value="AAD55359.1"/>
    <property type="molecule type" value="mRNA"/>
</dbReference>
<dbReference type="EMBL" id="AL136936">
    <property type="protein sequence ID" value="CAB66870.1"/>
    <property type="molecule type" value="mRNA"/>
</dbReference>
<dbReference type="EMBL" id="AF217987">
    <property type="protein sequence ID" value="AAG17230.1"/>
    <property type="molecule type" value="mRNA"/>
</dbReference>
<dbReference type="EMBL" id="BT006876">
    <property type="protein sequence ID" value="AAP35522.1"/>
    <property type="molecule type" value="mRNA"/>
</dbReference>
<dbReference type="EMBL" id="CR533453">
    <property type="protein sequence ID" value="CAG38484.1"/>
    <property type="molecule type" value="mRNA"/>
</dbReference>
<dbReference type="EMBL" id="AK312501">
    <property type="protein sequence ID" value="BAG35403.1"/>
    <property type="molecule type" value="mRNA"/>
</dbReference>
<dbReference type="EMBL" id="CH471054">
    <property type="protein sequence ID" value="EAW98144.1"/>
    <property type="molecule type" value="Genomic_DNA"/>
</dbReference>
<dbReference type="EMBL" id="BC002673">
    <property type="protein sequence ID" value="AAH02673.1"/>
    <property type="molecule type" value="mRNA"/>
</dbReference>
<dbReference type="CCDS" id="CCDS9189.1"/>
<dbReference type="RefSeq" id="NP_055180.1">
    <property type="nucleotide sequence ID" value="NM_014365.3"/>
</dbReference>
<dbReference type="PDB" id="8S7A">
    <property type="method" value="X-ray"/>
    <property type="resolution" value="1.95 A"/>
    <property type="chains" value="A=87-168"/>
</dbReference>
<dbReference type="PDBsum" id="8S7A"/>
<dbReference type="SMR" id="Q9UJY1"/>
<dbReference type="BioGRID" id="117689">
    <property type="interactions" value="189"/>
</dbReference>
<dbReference type="CORUM" id="Q9UJY1"/>
<dbReference type="ELM" id="Q9UJY1"/>
<dbReference type="FunCoup" id="Q9UJY1">
    <property type="interactions" value="487"/>
</dbReference>
<dbReference type="IntAct" id="Q9UJY1">
    <property type="interactions" value="157"/>
</dbReference>
<dbReference type="MINT" id="Q9UJY1"/>
<dbReference type="STRING" id="9606.ENSP00000281938"/>
<dbReference type="GlyGen" id="Q9UJY1">
    <property type="glycosylation" value="3 sites, 1 O-linked glycan (2 sites)"/>
</dbReference>
<dbReference type="iPTMnet" id="Q9UJY1"/>
<dbReference type="PhosphoSitePlus" id="Q9UJY1"/>
<dbReference type="BioMuta" id="HSPB8"/>
<dbReference type="DMDM" id="13431576"/>
<dbReference type="jPOST" id="Q9UJY1"/>
<dbReference type="MassIVE" id="Q9UJY1"/>
<dbReference type="PaxDb" id="9606-ENSP00000281938"/>
<dbReference type="PeptideAtlas" id="Q9UJY1"/>
<dbReference type="ProteomicsDB" id="84690"/>
<dbReference type="Pumba" id="Q9UJY1"/>
<dbReference type="Antibodypedia" id="18895">
    <property type="antibodies" value="602 antibodies from 41 providers"/>
</dbReference>
<dbReference type="DNASU" id="26353"/>
<dbReference type="Ensembl" id="ENST00000281938.7">
    <property type="protein sequence ID" value="ENSP00000281938.3"/>
    <property type="gene ID" value="ENSG00000152137.8"/>
</dbReference>
<dbReference type="GeneID" id="26353"/>
<dbReference type="KEGG" id="hsa:26353"/>
<dbReference type="MANE-Select" id="ENST00000281938.7">
    <property type="protein sequence ID" value="ENSP00000281938.3"/>
    <property type="RefSeq nucleotide sequence ID" value="NM_014365.3"/>
    <property type="RefSeq protein sequence ID" value="NP_055180.1"/>
</dbReference>
<dbReference type="UCSC" id="uc001txb.4">
    <property type="organism name" value="human"/>
</dbReference>
<dbReference type="AGR" id="HGNC:30171"/>
<dbReference type="CTD" id="26353"/>
<dbReference type="DisGeNET" id="26353"/>
<dbReference type="GeneCards" id="HSPB8"/>
<dbReference type="GeneReviews" id="HSPB8"/>
<dbReference type="HGNC" id="HGNC:30171">
    <property type="gene designation" value="HSPB8"/>
</dbReference>
<dbReference type="HPA" id="ENSG00000152137">
    <property type="expression patterns" value="Tissue enhanced (skeletal)"/>
</dbReference>
<dbReference type="MalaCards" id="HSPB8"/>
<dbReference type="MIM" id="158590">
    <property type="type" value="phenotype"/>
</dbReference>
<dbReference type="MIM" id="608014">
    <property type="type" value="gene"/>
</dbReference>
<dbReference type="MIM" id="608673">
    <property type="type" value="phenotype"/>
</dbReference>
<dbReference type="MIM" id="621078">
    <property type="type" value="phenotype"/>
</dbReference>
<dbReference type="neXtProt" id="NX_Q9UJY1"/>
<dbReference type="OpenTargets" id="ENSG00000152137"/>
<dbReference type="Orphanet" id="99945">
    <property type="disease" value="Autosomal dominant Charcot-Marie-Tooth disease type 2L"/>
</dbReference>
<dbReference type="Orphanet" id="476093">
    <property type="disease" value="Autosomal dominant distal axonal motor neuropathy-myofibrillar myopathy syndrome"/>
</dbReference>
<dbReference type="Orphanet" id="139525">
    <property type="disease" value="Distal hereditary motor neuropathy type 2"/>
</dbReference>
<dbReference type="PharmGKB" id="PA134900173"/>
<dbReference type="VEuPathDB" id="HostDB:ENSG00000152137"/>
<dbReference type="eggNOG" id="KOG3591">
    <property type="taxonomic scope" value="Eukaryota"/>
</dbReference>
<dbReference type="GeneTree" id="ENSGT00940000160605"/>
<dbReference type="HOGENOM" id="CLU_095001_0_1_1"/>
<dbReference type="InParanoid" id="Q9UJY1"/>
<dbReference type="OMA" id="PCHYPSR"/>
<dbReference type="OrthoDB" id="10060792at2759"/>
<dbReference type="PAN-GO" id="Q9UJY1">
    <property type="GO annotations" value="4 GO annotations based on evolutionary models"/>
</dbReference>
<dbReference type="PhylomeDB" id="Q9UJY1"/>
<dbReference type="TreeFam" id="TF105049"/>
<dbReference type="PathwayCommons" id="Q9UJY1"/>
<dbReference type="Reactome" id="R-HSA-3371571">
    <property type="pathway name" value="HSF1-dependent transactivation"/>
</dbReference>
<dbReference type="SignaLink" id="Q9UJY1"/>
<dbReference type="SIGNOR" id="Q9UJY1"/>
<dbReference type="BioGRID-ORCS" id="26353">
    <property type="hits" value="17 hits in 1155 CRISPR screens"/>
</dbReference>
<dbReference type="ChiTaRS" id="HSPB8">
    <property type="organism name" value="human"/>
</dbReference>
<dbReference type="GeneWiki" id="HSPB8"/>
<dbReference type="GenomeRNAi" id="26353"/>
<dbReference type="Pharos" id="Q9UJY1">
    <property type="development level" value="Tbio"/>
</dbReference>
<dbReference type="PRO" id="PR:Q9UJY1"/>
<dbReference type="Proteomes" id="UP000005640">
    <property type="component" value="Chromosome 12"/>
</dbReference>
<dbReference type="RNAct" id="Q9UJY1">
    <property type="molecule type" value="protein"/>
</dbReference>
<dbReference type="Bgee" id="ENSG00000152137">
    <property type="expression patterns" value="Expressed in skeletal muscle tissue of rectus abdominis and 196 other cell types or tissues"/>
</dbReference>
<dbReference type="ExpressionAtlas" id="Q9UJY1">
    <property type="expression patterns" value="baseline and differential"/>
</dbReference>
<dbReference type="GO" id="GO:0005737">
    <property type="term" value="C:cytoplasm"/>
    <property type="evidence" value="ECO:0000314"/>
    <property type="project" value="UniProtKB"/>
</dbReference>
<dbReference type="GO" id="GO:0005829">
    <property type="term" value="C:cytosol"/>
    <property type="evidence" value="ECO:0000314"/>
    <property type="project" value="HPA"/>
</dbReference>
<dbReference type="GO" id="GO:0005654">
    <property type="term" value="C:nucleoplasm"/>
    <property type="evidence" value="ECO:0000314"/>
    <property type="project" value="HPA"/>
</dbReference>
<dbReference type="GO" id="GO:0005634">
    <property type="term" value="C:nucleus"/>
    <property type="evidence" value="ECO:0000314"/>
    <property type="project" value="UniProtKB"/>
</dbReference>
<dbReference type="GO" id="GO:0101031">
    <property type="term" value="C:protein folding chaperone complex"/>
    <property type="evidence" value="ECO:0000314"/>
    <property type="project" value="ARUK-UCL"/>
</dbReference>
<dbReference type="GO" id="GO:0042802">
    <property type="term" value="F:identical protein binding"/>
    <property type="evidence" value="ECO:0000353"/>
    <property type="project" value="IntAct"/>
</dbReference>
<dbReference type="GO" id="GO:0042803">
    <property type="term" value="F:protein homodimerization activity"/>
    <property type="evidence" value="ECO:0000353"/>
    <property type="project" value="ARUK-UCL"/>
</dbReference>
<dbReference type="GO" id="GO:0034620">
    <property type="term" value="P:cellular response to unfolded protein"/>
    <property type="evidence" value="ECO:0000315"/>
    <property type="project" value="ARUK-UCL"/>
</dbReference>
<dbReference type="GO" id="GO:1905337">
    <property type="term" value="P:positive regulation of aggrephagy"/>
    <property type="evidence" value="ECO:0000315"/>
    <property type="project" value="ARUK-UCL"/>
</dbReference>
<dbReference type="CDD" id="cd06480">
    <property type="entry name" value="ACD_HspB8_like"/>
    <property type="match status" value="1"/>
</dbReference>
<dbReference type="FunFam" id="2.60.40.790:FF:000028">
    <property type="entry name" value="Heat shock protein beta-8"/>
    <property type="match status" value="1"/>
</dbReference>
<dbReference type="Gene3D" id="2.60.40.790">
    <property type="match status" value="1"/>
</dbReference>
<dbReference type="InterPro" id="IPR002068">
    <property type="entry name" value="A-crystallin/Hsp20_dom"/>
</dbReference>
<dbReference type="InterPro" id="IPR001436">
    <property type="entry name" value="Alpha-crystallin/sHSP_animal"/>
</dbReference>
<dbReference type="InterPro" id="IPR008978">
    <property type="entry name" value="HSP20-like_chaperone"/>
</dbReference>
<dbReference type="InterPro" id="IPR043254">
    <property type="entry name" value="HSPB8"/>
</dbReference>
<dbReference type="InterPro" id="IPR042790">
    <property type="entry name" value="HspB8_ACD"/>
</dbReference>
<dbReference type="PANTHER" id="PTHR46906">
    <property type="entry name" value="HEAT SHOCK PROTEIN BETA-8"/>
    <property type="match status" value="1"/>
</dbReference>
<dbReference type="PANTHER" id="PTHR46906:SF1">
    <property type="entry name" value="HEAT SHOCK PROTEIN BETA-8"/>
    <property type="match status" value="1"/>
</dbReference>
<dbReference type="Pfam" id="PF00011">
    <property type="entry name" value="HSP20"/>
    <property type="match status" value="1"/>
</dbReference>
<dbReference type="PRINTS" id="PR00299">
    <property type="entry name" value="ACRYSTALLIN"/>
</dbReference>
<dbReference type="SUPFAM" id="SSF49764">
    <property type="entry name" value="HSP20-like chaperones"/>
    <property type="match status" value="1"/>
</dbReference>
<dbReference type="PROSITE" id="PS01031">
    <property type="entry name" value="SHSP"/>
    <property type="match status" value="1"/>
</dbReference>
<comment type="function">
    <text evidence="2">Involved in the chaperone-assisted selective autophagy (CASA), a crucial process for protein quality control, particularly in mechanical strained cells and tissues such as muscle. Displays temperature-dependent chaperone activity.</text>
</comment>
<comment type="subunit">
    <text evidence="5 12 15 16">Monomer. Forms a ternary complex with BAG3 and HSPA1A (PubMed:27884606). Component of the chaperone-assisted selective autophagy (CASA) complex consisting of BAG3, HSPA8/HSC70, HSPB8 and STUB1/CHIP (PubMed:20060297). Interacts with HSPB1 (PubMed:11342557). Interacts with DNAJB6 (PubMed:22366786). Interacts with BAG3 (PubMed:28144995).</text>
</comment>
<comment type="interaction">
    <interactant intactId="EBI-739074">
        <id>Q9UJY1</id>
    </interactant>
    <interactant intactId="EBI-745689">
        <id>Q7L5A3</id>
        <label>ATOSB</label>
    </interactant>
    <organismsDiffer>false</organismsDiffer>
    <experiments>3</experiments>
</comment>
<comment type="interaction">
    <interactant intactId="EBI-739074">
        <id>Q9UJY1</id>
    </interactant>
    <interactant intactId="EBI-747185">
        <id>O95817</id>
        <label>BAG3</label>
    </interactant>
    <organismsDiffer>false</organismsDiffer>
    <experiments>13</experiments>
</comment>
<comment type="interaction">
    <interactant intactId="EBI-739074">
        <id>Q9UJY1</id>
    </interactant>
    <interactant intactId="EBI-739879">
        <id>Q53TS8</id>
        <label>C2CD6</label>
    </interactant>
    <organismsDiffer>false</organismsDiffer>
    <experiments>3</experiments>
</comment>
<comment type="interaction">
    <interactant intactId="EBI-739074">
        <id>Q9UJY1</id>
    </interactant>
    <interactant intactId="EBI-715161">
        <id>Q9UNI6</id>
        <label>DUSP12</label>
    </interactant>
    <organismsDiffer>false</organismsDiffer>
    <experiments>3</experiments>
</comment>
<comment type="interaction">
    <interactant intactId="EBI-739074">
        <id>Q9UJY1</id>
    </interactant>
    <interactant intactId="EBI-352682">
        <id>P04792</id>
        <label>HSPB1</label>
    </interactant>
    <organismsDiffer>false</organismsDiffer>
    <experiments>3</experiments>
</comment>
<comment type="interaction">
    <interactant intactId="EBI-739074">
        <id>Q9UJY1</id>
    </interactant>
    <interactant intactId="EBI-739395">
        <id>Q16082</id>
        <label>HSPB2</label>
    </interactant>
    <organismsDiffer>false</organismsDiffer>
    <experiments>3</experiments>
</comment>
<comment type="interaction">
    <interactant intactId="EBI-739074">
        <id>Q9UJY1</id>
    </interactant>
    <interactant intactId="EBI-739361">
        <id>Q9UBY9</id>
        <label>HSPB7</label>
    </interactant>
    <organismsDiffer>false</organismsDiffer>
    <experiments>11</experiments>
</comment>
<comment type="interaction">
    <interactant intactId="EBI-739074">
        <id>Q9UJY1</id>
    </interactant>
    <interactant intactId="EBI-739074">
        <id>Q9UJY1</id>
        <label>HSPB8</label>
    </interactant>
    <organismsDiffer>false</organismsDiffer>
    <experiments>6</experiments>
</comment>
<comment type="interaction">
    <interactant intactId="EBI-739074">
        <id>Q9UJY1</id>
    </interactant>
    <interactant intactId="EBI-2555085">
        <id>Q8IVT2</id>
        <label>MISP</label>
    </interactant>
    <organismsDiffer>false</organismsDiffer>
    <experiments>3</experiments>
</comment>
<comment type="interaction">
    <interactant intactId="EBI-739074">
        <id>Q9UJY1</id>
    </interactant>
    <interactant intactId="EBI-1051875">
        <id>Q15773</id>
        <label>MLF2</label>
    </interactant>
    <organismsDiffer>false</organismsDiffer>
    <experiments>3</experiments>
</comment>
<comment type="interaction">
    <interactant intactId="EBI-739074">
        <id>Q9UJY1</id>
    </interactant>
    <interactant intactId="EBI-21496213">
        <id>Q9HC29-1</id>
        <label>NOD2</label>
    </interactant>
    <organismsDiffer>false</organismsDiffer>
    <experiments>2</experiments>
</comment>
<comment type="interaction">
    <interactant intactId="EBI-739074">
        <id>Q9UJY1</id>
    </interactant>
    <interactant intactId="EBI-2798044">
        <id>Q2TAL8</id>
        <label>QRICH1</label>
    </interactant>
    <organismsDiffer>false</organismsDiffer>
    <experiments>7</experiments>
</comment>
<comment type="interaction">
    <interactant intactId="EBI-739074">
        <id>Q9UJY1</id>
    </interactant>
    <interactant intactId="EBI-744831">
        <id>P49247</id>
        <label>RPIA</label>
    </interactant>
    <organismsDiffer>false</organismsDiffer>
    <experiments>3</experiments>
</comment>
<comment type="interaction">
    <interactant intactId="EBI-739074">
        <id>Q9UJY1</id>
    </interactant>
    <interactant intactId="EBI-12874738">
        <id>O15375</id>
        <label>SLC16A5</label>
    </interactant>
    <organismsDiffer>false</organismsDiffer>
    <experiments>3</experiments>
</comment>
<comment type="interaction">
    <interactant intactId="EBI-739074">
        <id>Q9UJY1</id>
    </interactant>
    <interactant intactId="EBI-1539606">
        <id>O14512</id>
        <label>SOCS7</label>
    </interactant>
    <organismsDiffer>false</organismsDiffer>
    <experiments>3</experiments>
</comment>
<comment type="interaction">
    <interactant intactId="EBI-739074">
        <id>Q9UJY1</id>
    </interactant>
    <interactant intactId="EBI-8451480">
        <id>O75865-2</id>
        <label>TRAPPC6A</label>
    </interactant>
    <organismsDiffer>false</organismsDiffer>
    <experiments>3</experiments>
</comment>
<comment type="subcellular location">
    <subcellularLocation>
        <location evidence="11 16">Cytoplasm</location>
    </subcellularLocation>
    <subcellularLocation>
        <location evidence="11">Nucleus</location>
    </subcellularLocation>
    <text>Translocates to nuclear foci during heat shock.</text>
</comment>
<comment type="tissue specificity">
    <text evidence="6">Predominantly expressed in skeletal muscle and heart.</text>
</comment>
<comment type="induction">
    <text>By 17-beta-estradiol.</text>
</comment>
<comment type="disease" evidence="8 16 18">
    <disease id="DI-00400">
        <name>Neuronopathy, distal hereditary motor, autosomal dominant 2</name>
        <acronym>HMND2</acronym>
        <description>A form of distal hereditary motor neuronopathy, a heterogeneous group of neuromuscular disorders caused by selective degeneration of motor neurons in the anterior horn of the spinal cord, without sensory deficit in the posterior horn. The overall clinical picture consists of a classical distal muscular atrophy syndrome in the legs without clinical sensory loss. The disease starts with weakness and wasting of distal muscles of the anterior tibial and peroneal compartments of the legs. Later on, weakness and atrophy may expand to the proximal muscles of the lower limbs and/or to the distal upper limbs.</description>
        <dbReference type="MIM" id="158590"/>
    </disease>
    <text>The disease is caused by variants affecting the gene represented in this entry.</text>
</comment>
<comment type="disease" evidence="9 13">
    <disease id="DI-00284">
        <name>Charcot-Marie-Tooth disease, axonal, type 2L</name>
        <acronym>CMT2L</acronym>
        <description>An autosomal dominant, axonal form of Charcot-Marie-Tooth disease, a disorder of the peripheral nervous system, characterized by progressive weakness and atrophy, initially of the peroneal muscles and later of the distal muscles of the arms. Charcot-Marie-Tooth disease is classified in two main groups on the basis of electrophysiologic properties and histopathology: primary peripheral demyelinating neuropathies (designated CMT1 when they are dominantly inherited) and primary peripheral axonal neuropathies (CMT2). Neuropathies of the CMT2 group are characterized by signs of axonal degeneration in the absence of obvious myelin alterations, normal or slightly reduced nerve conduction velocities, and progressive distal muscle weakness and atrophy.</description>
        <dbReference type="MIM" id="608673"/>
    </disease>
    <text>The disease is caused by variants affecting the gene represented in this entry.</text>
</comment>
<comment type="disease" evidence="14 17 19 20 21 22">
    <disease id="DI-06995">
        <name>Myopathy, myofibrillar, 13, with rimmed vacuoles</name>
        <acronym>MFM13</acronym>
        <description>A form of myofibrillar myopathy, a group of chronic neuromuscular disorders characterized at ultrastructural level by disintegration of the sarcomeric Z disk and myofibrils, and replacement of the normal myofibrillar markings by small dense granules, or larger hyaline masses, or amorphous material. MFM13 is an autosomal dominant form characterized by progressive distal and proximal muscle weakness, muscle atrophy, and unsteady gait and walking difficulties. Symptoms usually begin in adulthood, although earlier disease onset has been reported in some cases. Muscle biopsy shows myofibrillar changes and rimmed vacuoles. Some patients have features of a peripheral motor or sensorimotor neuropathy.</description>
        <dbReference type="MIM" id="621078"/>
    </disease>
    <text>The disease is caused by variants affecting the gene represented in this entry.</text>
</comment>
<comment type="similarity">
    <text evidence="3">Belongs to the small heat shock protein (HSP20) family.</text>
</comment>
<comment type="caution">
    <text evidence="24">Was reported to have a protein kinase activity and to act as a Mn(2+)-dependent serine-threonine-specific protein kinase.</text>
</comment>
<comment type="online information" name="Inherited peripheral neuropathies mutation db">
    <link uri="https://uantwerpen.vib.be/CMTMutations"/>
</comment>
<accession>Q9UJY1</accession>
<accession>B2R6A6</accession>
<accession>Q6FIH3</accession>
<accession>Q9UKS3</accession>